<organism>
    <name type="scientific">Lactobacillus acidophilus (strain ATCC 700396 / NCK56 / N2 / NCFM)</name>
    <dbReference type="NCBI Taxonomy" id="272621"/>
    <lineage>
        <taxon>Bacteria</taxon>
        <taxon>Bacillati</taxon>
        <taxon>Bacillota</taxon>
        <taxon>Bacilli</taxon>
        <taxon>Lactobacillales</taxon>
        <taxon>Lactobacillaceae</taxon>
        <taxon>Lactobacillus</taxon>
    </lineage>
</organism>
<dbReference type="EC" id="4.1.1.23" evidence="1"/>
<dbReference type="EMBL" id="CP000033">
    <property type="protein sequence ID" value="AAV43211.1"/>
    <property type="molecule type" value="Genomic_DNA"/>
</dbReference>
<dbReference type="RefSeq" id="WP_003548039.1">
    <property type="nucleotide sequence ID" value="NC_006814.3"/>
</dbReference>
<dbReference type="RefSeq" id="YP_194242.1">
    <property type="nucleotide sequence ID" value="NC_006814.3"/>
</dbReference>
<dbReference type="PDB" id="3TFX">
    <property type="method" value="X-ray"/>
    <property type="resolution" value="2.19 A"/>
    <property type="chains" value="A/B=1-235"/>
</dbReference>
<dbReference type="PDBsum" id="3TFX"/>
<dbReference type="SMR" id="Q5FJB3"/>
<dbReference type="STRING" id="272621.LBA1386"/>
<dbReference type="GeneID" id="93289539"/>
<dbReference type="KEGG" id="lac:LBA1386"/>
<dbReference type="PATRIC" id="fig|272621.13.peg.1311"/>
<dbReference type="eggNOG" id="COG0284">
    <property type="taxonomic scope" value="Bacteria"/>
</dbReference>
<dbReference type="HOGENOM" id="CLU_067069_1_1_9"/>
<dbReference type="OrthoDB" id="9806203at2"/>
<dbReference type="BioCyc" id="LACI272621:G1G49-1360-MONOMER"/>
<dbReference type="UniPathway" id="UPA00070">
    <property type="reaction ID" value="UER00120"/>
</dbReference>
<dbReference type="EvolutionaryTrace" id="Q5FJB3"/>
<dbReference type="Proteomes" id="UP000006381">
    <property type="component" value="Chromosome"/>
</dbReference>
<dbReference type="GO" id="GO:0005829">
    <property type="term" value="C:cytosol"/>
    <property type="evidence" value="ECO:0007669"/>
    <property type="project" value="TreeGrafter"/>
</dbReference>
<dbReference type="GO" id="GO:0004590">
    <property type="term" value="F:orotidine-5'-phosphate decarboxylase activity"/>
    <property type="evidence" value="ECO:0007669"/>
    <property type="project" value="UniProtKB-UniRule"/>
</dbReference>
<dbReference type="GO" id="GO:0006207">
    <property type="term" value="P:'de novo' pyrimidine nucleobase biosynthetic process"/>
    <property type="evidence" value="ECO:0007669"/>
    <property type="project" value="InterPro"/>
</dbReference>
<dbReference type="GO" id="GO:0044205">
    <property type="term" value="P:'de novo' UMP biosynthetic process"/>
    <property type="evidence" value="ECO:0007669"/>
    <property type="project" value="UniProtKB-UniRule"/>
</dbReference>
<dbReference type="CDD" id="cd04725">
    <property type="entry name" value="OMP_decarboxylase_like"/>
    <property type="match status" value="1"/>
</dbReference>
<dbReference type="FunFam" id="3.20.20.70:FF:000015">
    <property type="entry name" value="Orotidine 5'-phosphate decarboxylase"/>
    <property type="match status" value="1"/>
</dbReference>
<dbReference type="Gene3D" id="3.20.20.70">
    <property type="entry name" value="Aldolase class I"/>
    <property type="match status" value="1"/>
</dbReference>
<dbReference type="HAMAP" id="MF_01200_B">
    <property type="entry name" value="OMPdecase_type1_B"/>
    <property type="match status" value="1"/>
</dbReference>
<dbReference type="InterPro" id="IPR013785">
    <property type="entry name" value="Aldolase_TIM"/>
</dbReference>
<dbReference type="InterPro" id="IPR014732">
    <property type="entry name" value="OMPdecase"/>
</dbReference>
<dbReference type="InterPro" id="IPR018089">
    <property type="entry name" value="OMPdecase_AS"/>
</dbReference>
<dbReference type="InterPro" id="IPR047596">
    <property type="entry name" value="OMPdecase_bac"/>
</dbReference>
<dbReference type="InterPro" id="IPR001754">
    <property type="entry name" value="OMPdeCOase_dom"/>
</dbReference>
<dbReference type="InterPro" id="IPR011060">
    <property type="entry name" value="RibuloseP-bd_barrel"/>
</dbReference>
<dbReference type="NCBIfam" id="NF001273">
    <property type="entry name" value="PRK00230.1"/>
    <property type="match status" value="1"/>
</dbReference>
<dbReference type="NCBIfam" id="TIGR01740">
    <property type="entry name" value="pyrF"/>
    <property type="match status" value="1"/>
</dbReference>
<dbReference type="PANTHER" id="PTHR32119">
    <property type="entry name" value="OROTIDINE 5'-PHOSPHATE DECARBOXYLASE"/>
    <property type="match status" value="1"/>
</dbReference>
<dbReference type="PANTHER" id="PTHR32119:SF2">
    <property type="entry name" value="OROTIDINE 5'-PHOSPHATE DECARBOXYLASE"/>
    <property type="match status" value="1"/>
</dbReference>
<dbReference type="Pfam" id="PF00215">
    <property type="entry name" value="OMPdecase"/>
    <property type="match status" value="1"/>
</dbReference>
<dbReference type="SMART" id="SM00934">
    <property type="entry name" value="OMPdecase"/>
    <property type="match status" value="1"/>
</dbReference>
<dbReference type="SUPFAM" id="SSF51366">
    <property type="entry name" value="Ribulose-phoshate binding barrel"/>
    <property type="match status" value="1"/>
</dbReference>
<dbReference type="PROSITE" id="PS00156">
    <property type="entry name" value="OMPDECASE"/>
    <property type="match status" value="1"/>
</dbReference>
<gene>
    <name evidence="1" type="primary">pyrF</name>
    <name type="ordered locus">LBA1386</name>
</gene>
<comment type="function">
    <text evidence="1">Catalyzes the decarboxylation of orotidine 5'-monophosphate (OMP) to uridine 5'-monophosphate (UMP).</text>
</comment>
<comment type="catalytic activity">
    <reaction evidence="1">
        <text>orotidine 5'-phosphate + H(+) = UMP + CO2</text>
        <dbReference type="Rhea" id="RHEA:11596"/>
        <dbReference type="ChEBI" id="CHEBI:15378"/>
        <dbReference type="ChEBI" id="CHEBI:16526"/>
        <dbReference type="ChEBI" id="CHEBI:57538"/>
        <dbReference type="ChEBI" id="CHEBI:57865"/>
        <dbReference type="EC" id="4.1.1.23"/>
    </reaction>
</comment>
<comment type="pathway">
    <text evidence="1">Pyrimidine metabolism; UMP biosynthesis via de novo pathway; UMP from orotate: step 2/2.</text>
</comment>
<comment type="subunit">
    <text evidence="1">Homodimer.</text>
</comment>
<comment type="similarity">
    <text evidence="1">Belongs to the OMP decarboxylase family. Type 1 subfamily.</text>
</comment>
<name>PYRF_LACAC</name>
<proteinExistence type="evidence at protein level"/>
<reference key="1">
    <citation type="journal article" date="2005" name="Proc. Natl. Acad. Sci. U.S.A.">
        <title>Complete genome sequence of the probiotic lactic acid bacterium Lactobacillus acidophilus NCFM.</title>
        <authorList>
            <person name="Altermann E."/>
            <person name="Russell W.M."/>
            <person name="Azcarate-Peril M.A."/>
            <person name="Barrangou R."/>
            <person name="Buck B.L."/>
            <person name="McAuliffe O."/>
            <person name="Souther N."/>
            <person name="Dobson A."/>
            <person name="Duong T."/>
            <person name="Callanan M."/>
            <person name="Lick S."/>
            <person name="Hamrick A."/>
            <person name="Cano R."/>
            <person name="Klaenhammer T.R."/>
        </authorList>
    </citation>
    <scope>NUCLEOTIDE SEQUENCE [LARGE SCALE GENOMIC DNA]</scope>
    <source>
        <strain>ATCC 700396 / NCK56 / N2 / NCFM</strain>
    </source>
</reference>
<evidence type="ECO:0000255" key="1">
    <source>
        <dbReference type="HAMAP-Rule" id="MF_01200"/>
    </source>
</evidence>
<evidence type="ECO:0007829" key="2">
    <source>
        <dbReference type="PDB" id="3TFX"/>
    </source>
</evidence>
<sequence>MDRPVIVALDLDNEEQLNKILSKLGDPHDVFVKVGMELFYNAGIDVIKKLTQQGYKIFLDLKMHDIPNTVYNGAKALAKLGITFTTVHALGGSQMIKSAKDGLIAGTPAGHSVPKLLAVTELTSISDDVLRNEQNCRLPMAEQVLSLAKMAKHSGADGVICSPLEVKKLHENIGDDFLYVTPGIRPAGNAKDDQSRVATPKMAKEWGSSAIVVGRPITLASDPKAAYEAIKKEFN</sequence>
<keyword id="KW-0002">3D-structure</keyword>
<keyword id="KW-0210">Decarboxylase</keyword>
<keyword id="KW-0456">Lyase</keyword>
<keyword id="KW-0665">Pyrimidine biosynthesis</keyword>
<keyword id="KW-1185">Reference proteome</keyword>
<protein>
    <recommendedName>
        <fullName evidence="1">Orotidine 5'-phosphate decarboxylase</fullName>
        <ecNumber evidence="1">4.1.1.23</ecNumber>
    </recommendedName>
    <alternativeName>
        <fullName evidence="1">OMP decarboxylase</fullName>
        <shortName evidence="1">OMPDCase</shortName>
        <shortName evidence="1">OMPdecase</shortName>
    </alternativeName>
</protein>
<accession>Q5FJB3</accession>
<feature type="chain" id="PRO_0000241868" description="Orotidine 5'-phosphate decarboxylase">
    <location>
        <begin position="1"/>
        <end position="235"/>
    </location>
</feature>
<feature type="active site" description="Proton donor" evidence="1">
    <location>
        <position position="62"/>
    </location>
</feature>
<feature type="binding site" evidence="1">
    <location>
        <position position="10"/>
    </location>
    <ligand>
        <name>substrate</name>
    </ligand>
</feature>
<feature type="binding site" evidence="1">
    <location>
        <position position="33"/>
    </location>
    <ligand>
        <name>substrate</name>
    </ligand>
</feature>
<feature type="binding site" evidence="1">
    <location>
        <begin position="60"/>
        <end position="69"/>
    </location>
    <ligand>
        <name>substrate</name>
    </ligand>
</feature>
<feature type="binding site" evidence="1">
    <location>
        <position position="123"/>
    </location>
    <ligand>
        <name>substrate</name>
    </ligand>
</feature>
<feature type="binding site" evidence="1">
    <location>
        <position position="185"/>
    </location>
    <ligand>
        <name>substrate</name>
    </ligand>
</feature>
<feature type="binding site" evidence="1">
    <location>
        <position position="194"/>
    </location>
    <ligand>
        <name>substrate</name>
    </ligand>
</feature>
<feature type="binding site" evidence="1">
    <location>
        <position position="214"/>
    </location>
    <ligand>
        <name>substrate</name>
    </ligand>
</feature>
<feature type="binding site" evidence="1">
    <location>
        <position position="215"/>
    </location>
    <ligand>
        <name>substrate</name>
    </ligand>
</feature>
<feature type="strand" evidence="2">
    <location>
        <begin position="5"/>
        <end position="8"/>
    </location>
</feature>
<feature type="helix" evidence="2">
    <location>
        <begin position="14"/>
        <end position="22"/>
    </location>
</feature>
<feature type="helix" evidence="2">
    <location>
        <begin position="27"/>
        <end position="29"/>
    </location>
</feature>
<feature type="strand" evidence="2">
    <location>
        <begin position="31"/>
        <end position="34"/>
    </location>
</feature>
<feature type="helix" evidence="2">
    <location>
        <begin position="36"/>
        <end position="42"/>
    </location>
</feature>
<feature type="helix" evidence="2">
    <location>
        <begin position="44"/>
        <end position="52"/>
    </location>
</feature>
<feature type="strand" evidence="2">
    <location>
        <begin position="56"/>
        <end position="63"/>
    </location>
</feature>
<feature type="helix" evidence="2">
    <location>
        <begin position="67"/>
        <end position="78"/>
    </location>
</feature>
<feature type="turn" evidence="2">
    <location>
        <begin position="79"/>
        <end position="81"/>
    </location>
</feature>
<feature type="strand" evidence="2">
    <location>
        <begin position="83"/>
        <end position="88"/>
    </location>
</feature>
<feature type="helix" evidence="2">
    <location>
        <begin position="89"/>
        <end position="91"/>
    </location>
</feature>
<feature type="helix" evidence="2">
    <location>
        <begin position="93"/>
        <end position="106"/>
    </location>
</feature>
<feature type="strand" evidence="2">
    <location>
        <begin position="115"/>
        <end position="119"/>
    </location>
</feature>
<feature type="helix" evidence="2">
    <location>
        <begin position="127"/>
        <end position="132"/>
    </location>
</feature>
<feature type="strand" evidence="2">
    <location>
        <begin position="136"/>
        <end position="138"/>
    </location>
</feature>
<feature type="helix" evidence="2">
    <location>
        <begin position="140"/>
        <end position="153"/>
    </location>
</feature>
<feature type="strand" evidence="2">
    <location>
        <begin position="158"/>
        <end position="160"/>
    </location>
</feature>
<feature type="helix" evidence="2">
    <location>
        <begin position="163"/>
        <end position="165"/>
    </location>
</feature>
<feature type="helix" evidence="2">
    <location>
        <begin position="166"/>
        <end position="173"/>
    </location>
</feature>
<feature type="strand" evidence="2">
    <location>
        <begin position="175"/>
        <end position="181"/>
    </location>
</feature>
<feature type="helix" evidence="2">
    <location>
        <begin position="200"/>
        <end position="205"/>
    </location>
</feature>
<feature type="strand" evidence="2">
    <location>
        <begin position="209"/>
        <end position="213"/>
    </location>
</feature>
<feature type="helix" evidence="2">
    <location>
        <begin position="215"/>
        <end position="218"/>
    </location>
</feature>
<feature type="strand" evidence="2">
    <location>
        <begin position="220"/>
        <end position="222"/>
    </location>
</feature>
<feature type="helix" evidence="2">
    <location>
        <begin position="223"/>
        <end position="234"/>
    </location>
</feature>